<comment type="function">
    <text evidence="1">Key component of the proton channel; it plays a direct role in the translocation of protons across the membrane.</text>
</comment>
<comment type="subunit">
    <text evidence="1">F-type ATPases have 2 components, CF(1) - the catalytic core - and CF(0) - the membrane proton channel. CF(1) has five subunits: alpha(3), beta(3), gamma(1), delta(1), epsilon(1). CF(0) has four main subunits: a, b, b' and c.</text>
</comment>
<comment type="subcellular location">
    <subcellularLocation>
        <location evidence="1">Cellular thylakoid membrane</location>
        <topology evidence="1">Multi-pass membrane protein</topology>
    </subcellularLocation>
</comment>
<comment type="similarity">
    <text evidence="1">Belongs to the ATPase A chain family.</text>
</comment>
<proteinExistence type="inferred from homology"/>
<accession>A8G6V6</accession>
<organism>
    <name type="scientific">Prochlorococcus marinus (strain MIT 9215)</name>
    <dbReference type="NCBI Taxonomy" id="93060"/>
    <lineage>
        <taxon>Bacteria</taxon>
        <taxon>Bacillati</taxon>
        <taxon>Cyanobacteriota</taxon>
        <taxon>Cyanophyceae</taxon>
        <taxon>Synechococcales</taxon>
        <taxon>Prochlorococcaceae</taxon>
        <taxon>Prochlorococcus</taxon>
    </lineage>
</organism>
<evidence type="ECO:0000255" key="1">
    <source>
        <dbReference type="HAMAP-Rule" id="MF_01393"/>
    </source>
</evidence>
<protein>
    <recommendedName>
        <fullName evidence="1">ATP synthase subunit a</fullName>
    </recommendedName>
    <alternativeName>
        <fullName evidence="1">ATP synthase F0 sector subunit a</fullName>
    </alternativeName>
    <alternativeName>
        <fullName evidence="1">F-ATPase subunit 6</fullName>
    </alternativeName>
</protein>
<sequence length="241" mass="27306">MFLNSLLTNFAALEVGQHLYWQIGNIRLHGQVFLTSWILLGALLVFISLGTKKMENDPKGLQNLLEFLWDYIRDLARTQIGEKVYRDWMPFIGTLFLFVFVSNWGGALIPWRLIKLPSGELGAPTADINTTIALALLVSLSYFYAGLSNKGWRYFEYYVHPTPIMLPFKILEDFTKPLSLSFRLFGNILADELVVGVLVFLVPLILPIPVMFLGLFTSAIQALIFATLAAYYIGEAVEEHH</sequence>
<gene>
    <name evidence="1" type="primary">atpB</name>
    <name evidence="1" type="synonym">atpI</name>
    <name type="ordered locus">P9215_17241</name>
</gene>
<name>ATP6_PROM2</name>
<reference key="1">
    <citation type="journal article" date="2007" name="PLoS Genet.">
        <title>Patterns and implications of gene gain and loss in the evolution of Prochlorococcus.</title>
        <authorList>
            <person name="Kettler G.C."/>
            <person name="Martiny A.C."/>
            <person name="Huang K."/>
            <person name="Zucker J."/>
            <person name="Coleman M.L."/>
            <person name="Rodrigue S."/>
            <person name="Chen F."/>
            <person name="Lapidus A."/>
            <person name="Ferriera S."/>
            <person name="Johnson J."/>
            <person name="Steglich C."/>
            <person name="Church G.M."/>
            <person name="Richardson P."/>
            <person name="Chisholm S.W."/>
        </authorList>
    </citation>
    <scope>NUCLEOTIDE SEQUENCE [LARGE SCALE GENOMIC DNA]</scope>
    <source>
        <strain>MIT 9215</strain>
    </source>
</reference>
<dbReference type="EMBL" id="CP000825">
    <property type="protein sequence ID" value="ABV51337.1"/>
    <property type="molecule type" value="Genomic_DNA"/>
</dbReference>
<dbReference type="RefSeq" id="WP_012008357.1">
    <property type="nucleotide sequence ID" value="NC_009840.1"/>
</dbReference>
<dbReference type="SMR" id="A8G6V6"/>
<dbReference type="STRING" id="93060.P9215_17241"/>
<dbReference type="KEGG" id="pmh:P9215_17241"/>
<dbReference type="eggNOG" id="COG0356">
    <property type="taxonomic scope" value="Bacteria"/>
</dbReference>
<dbReference type="HOGENOM" id="CLU_041018_2_4_3"/>
<dbReference type="OrthoDB" id="9789241at2"/>
<dbReference type="Proteomes" id="UP000002014">
    <property type="component" value="Chromosome"/>
</dbReference>
<dbReference type="GO" id="GO:0031676">
    <property type="term" value="C:plasma membrane-derived thylakoid membrane"/>
    <property type="evidence" value="ECO:0007669"/>
    <property type="project" value="UniProtKB-SubCell"/>
</dbReference>
<dbReference type="GO" id="GO:0045259">
    <property type="term" value="C:proton-transporting ATP synthase complex"/>
    <property type="evidence" value="ECO:0007669"/>
    <property type="project" value="UniProtKB-KW"/>
</dbReference>
<dbReference type="GO" id="GO:0046933">
    <property type="term" value="F:proton-transporting ATP synthase activity, rotational mechanism"/>
    <property type="evidence" value="ECO:0007669"/>
    <property type="project" value="UniProtKB-UniRule"/>
</dbReference>
<dbReference type="CDD" id="cd00310">
    <property type="entry name" value="ATP-synt_Fo_a_6"/>
    <property type="match status" value="1"/>
</dbReference>
<dbReference type="FunFam" id="1.20.120.220:FF:000001">
    <property type="entry name" value="ATP synthase subunit a, chloroplastic"/>
    <property type="match status" value="1"/>
</dbReference>
<dbReference type="Gene3D" id="1.20.120.220">
    <property type="entry name" value="ATP synthase, F0 complex, subunit A"/>
    <property type="match status" value="1"/>
</dbReference>
<dbReference type="HAMAP" id="MF_01393">
    <property type="entry name" value="ATP_synth_a_bact"/>
    <property type="match status" value="1"/>
</dbReference>
<dbReference type="InterPro" id="IPR045082">
    <property type="entry name" value="ATP_syn_F0_a_bact/chloroplast"/>
</dbReference>
<dbReference type="InterPro" id="IPR000568">
    <property type="entry name" value="ATP_synth_F0_asu"/>
</dbReference>
<dbReference type="InterPro" id="IPR023011">
    <property type="entry name" value="ATP_synth_F0_asu_AS"/>
</dbReference>
<dbReference type="InterPro" id="IPR035908">
    <property type="entry name" value="F0_ATP_A_sf"/>
</dbReference>
<dbReference type="NCBIfam" id="TIGR01131">
    <property type="entry name" value="ATP_synt_6_or_A"/>
    <property type="match status" value="1"/>
</dbReference>
<dbReference type="PANTHER" id="PTHR42823">
    <property type="entry name" value="ATP SYNTHASE SUBUNIT A, CHLOROPLASTIC"/>
    <property type="match status" value="1"/>
</dbReference>
<dbReference type="PANTHER" id="PTHR42823:SF3">
    <property type="entry name" value="ATP SYNTHASE SUBUNIT A, CHLOROPLASTIC"/>
    <property type="match status" value="1"/>
</dbReference>
<dbReference type="Pfam" id="PF00119">
    <property type="entry name" value="ATP-synt_A"/>
    <property type="match status" value="1"/>
</dbReference>
<dbReference type="PRINTS" id="PR00123">
    <property type="entry name" value="ATPASEA"/>
</dbReference>
<dbReference type="SUPFAM" id="SSF81336">
    <property type="entry name" value="F1F0 ATP synthase subunit A"/>
    <property type="match status" value="1"/>
</dbReference>
<dbReference type="PROSITE" id="PS00449">
    <property type="entry name" value="ATPASE_A"/>
    <property type="match status" value="1"/>
</dbReference>
<keyword id="KW-0066">ATP synthesis</keyword>
<keyword id="KW-0138">CF(0)</keyword>
<keyword id="KW-0375">Hydrogen ion transport</keyword>
<keyword id="KW-0406">Ion transport</keyword>
<keyword id="KW-0472">Membrane</keyword>
<keyword id="KW-0793">Thylakoid</keyword>
<keyword id="KW-0812">Transmembrane</keyword>
<keyword id="KW-1133">Transmembrane helix</keyword>
<keyword id="KW-0813">Transport</keyword>
<feature type="chain" id="PRO_0000362377" description="ATP synthase subunit a">
    <location>
        <begin position="1"/>
        <end position="241"/>
    </location>
</feature>
<feature type="transmembrane region" description="Helical" evidence="1">
    <location>
        <begin position="30"/>
        <end position="50"/>
    </location>
</feature>
<feature type="transmembrane region" description="Helical" evidence="1">
    <location>
        <begin position="91"/>
        <end position="111"/>
    </location>
</feature>
<feature type="transmembrane region" description="Helical" evidence="1">
    <location>
        <begin position="128"/>
        <end position="148"/>
    </location>
</feature>
<feature type="transmembrane region" description="Helical" evidence="1">
    <location>
        <begin position="193"/>
        <end position="213"/>
    </location>
</feature>
<feature type="transmembrane region" description="Helical" evidence="1">
    <location>
        <begin position="214"/>
        <end position="234"/>
    </location>
</feature>